<organism>
    <name type="scientific">Rickettsia bellii (strain OSU 85-389)</name>
    <dbReference type="NCBI Taxonomy" id="391896"/>
    <lineage>
        <taxon>Bacteria</taxon>
        <taxon>Pseudomonadati</taxon>
        <taxon>Pseudomonadota</taxon>
        <taxon>Alphaproteobacteria</taxon>
        <taxon>Rickettsiales</taxon>
        <taxon>Rickettsiaceae</taxon>
        <taxon>Rickettsieae</taxon>
        <taxon>Rickettsia</taxon>
        <taxon>belli group</taxon>
    </lineage>
</organism>
<feature type="chain" id="PRO_1000054692" description="Large ribosomal subunit protein uL16">
    <location>
        <begin position="1"/>
        <end position="136"/>
    </location>
</feature>
<comment type="function">
    <text evidence="1">Binds 23S rRNA and is also seen to make contacts with the A and possibly P site tRNAs.</text>
</comment>
<comment type="subunit">
    <text evidence="1">Part of the 50S ribosomal subunit.</text>
</comment>
<comment type="similarity">
    <text evidence="1">Belongs to the universal ribosomal protein uL16 family.</text>
</comment>
<proteinExistence type="inferred from homology"/>
<gene>
    <name evidence="1" type="primary">rplP</name>
    <name type="ordered locus">A1I_02070</name>
</gene>
<keyword id="KW-0687">Ribonucleoprotein</keyword>
<keyword id="KW-0689">Ribosomal protein</keyword>
<keyword id="KW-0694">RNA-binding</keyword>
<keyword id="KW-0699">rRNA-binding</keyword>
<keyword id="KW-0820">tRNA-binding</keyword>
<dbReference type="EMBL" id="CP000849">
    <property type="protein sequence ID" value="ABV78798.1"/>
    <property type="molecule type" value="Genomic_DNA"/>
</dbReference>
<dbReference type="RefSeq" id="WP_011477714.1">
    <property type="nucleotide sequence ID" value="NC_009883.1"/>
</dbReference>
<dbReference type="SMR" id="A8GVC1"/>
<dbReference type="KEGG" id="rbo:A1I_02070"/>
<dbReference type="HOGENOM" id="CLU_078858_2_1_5"/>
<dbReference type="GO" id="GO:0022625">
    <property type="term" value="C:cytosolic large ribosomal subunit"/>
    <property type="evidence" value="ECO:0007669"/>
    <property type="project" value="TreeGrafter"/>
</dbReference>
<dbReference type="GO" id="GO:0019843">
    <property type="term" value="F:rRNA binding"/>
    <property type="evidence" value="ECO:0007669"/>
    <property type="project" value="UniProtKB-UniRule"/>
</dbReference>
<dbReference type="GO" id="GO:0003735">
    <property type="term" value="F:structural constituent of ribosome"/>
    <property type="evidence" value="ECO:0007669"/>
    <property type="project" value="InterPro"/>
</dbReference>
<dbReference type="GO" id="GO:0000049">
    <property type="term" value="F:tRNA binding"/>
    <property type="evidence" value="ECO:0007669"/>
    <property type="project" value="UniProtKB-KW"/>
</dbReference>
<dbReference type="GO" id="GO:0006412">
    <property type="term" value="P:translation"/>
    <property type="evidence" value="ECO:0007669"/>
    <property type="project" value="UniProtKB-UniRule"/>
</dbReference>
<dbReference type="CDD" id="cd01433">
    <property type="entry name" value="Ribosomal_L16_L10e"/>
    <property type="match status" value="1"/>
</dbReference>
<dbReference type="FunFam" id="3.90.1170.10:FF:000001">
    <property type="entry name" value="50S ribosomal protein L16"/>
    <property type="match status" value="1"/>
</dbReference>
<dbReference type="Gene3D" id="3.90.1170.10">
    <property type="entry name" value="Ribosomal protein L10e/L16"/>
    <property type="match status" value="1"/>
</dbReference>
<dbReference type="HAMAP" id="MF_01342">
    <property type="entry name" value="Ribosomal_uL16"/>
    <property type="match status" value="1"/>
</dbReference>
<dbReference type="InterPro" id="IPR047873">
    <property type="entry name" value="Ribosomal_uL16"/>
</dbReference>
<dbReference type="InterPro" id="IPR000114">
    <property type="entry name" value="Ribosomal_uL16_bact-type"/>
</dbReference>
<dbReference type="InterPro" id="IPR020798">
    <property type="entry name" value="Ribosomal_uL16_CS"/>
</dbReference>
<dbReference type="InterPro" id="IPR016180">
    <property type="entry name" value="Ribosomal_uL16_dom"/>
</dbReference>
<dbReference type="InterPro" id="IPR036920">
    <property type="entry name" value="Ribosomal_uL16_sf"/>
</dbReference>
<dbReference type="NCBIfam" id="TIGR01164">
    <property type="entry name" value="rplP_bact"/>
    <property type="match status" value="1"/>
</dbReference>
<dbReference type="PANTHER" id="PTHR12220">
    <property type="entry name" value="50S/60S RIBOSOMAL PROTEIN L16"/>
    <property type="match status" value="1"/>
</dbReference>
<dbReference type="PANTHER" id="PTHR12220:SF13">
    <property type="entry name" value="LARGE RIBOSOMAL SUBUNIT PROTEIN UL16M"/>
    <property type="match status" value="1"/>
</dbReference>
<dbReference type="Pfam" id="PF00252">
    <property type="entry name" value="Ribosomal_L16"/>
    <property type="match status" value="1"/>
</dbReference>
<dbReference type="PRINTS" id="PR00060">
    <property type="entry name" value="RIBOSOMALL16"/>
</dbReference>
<dbReference type="SUPFAM" id="SSF54686">
    <property type="entry name" value="Ribosomal protein L16p/L10e"/>
    <property type="match status" value="1"/>
</dbReference>
<dbReference type="PROSITE" id="PS00586">
    <property type="entry name" value="RIBOSOMAL_L16_1"/>
    <property type="match status" value="1"/>
</dbReference>
<dbReference type="PROSITE" id="PS00701">
    <property type="entry name" value="RIBOSOMAL_L16_2"/>
    <property type="match status" value="1"/>
</dbReference>
<sequence>MLAPKKQKFRKAHKGRVVSKSKAGTTLAFGSFGLKSIDGWRVTARQIEAGRKAATRCMKRQGRLWIRIFPDLPVSKKPAEVRMGKGKGNPEFFAVRVSPGRIMFEIEGVEEDVAVKALELASAKLPVRTRIVRHYE</sequence>
<evidence type="ECO:0000255" key="1">
    <source>
        <dbReference type="HAMAP-Rule" id="MF_01342"/>
    </source>
</evidence>
<evidence type="ECO:0000305" key="2"/>
<protein>
    <recommendedName>
        <fullName evidence="1">Large ribosomal subunit protein uL16</fullName>
    </recommendedName>
    <alternativeName>
        <fullName evidence="2">50S ribosomal protein L16</fullName>
    </alternativeName>
</protein>
<accession>A8GVC1</accession>
<reference key="1">
    <citation type="submission" date="2007-09" db="EMBL/GenBank/DDBJ databases">
        <title>Complete genome sequencing of Rickettsia bellii.</title>
        <authorList>
            <person name="Madan A."/>
            <person name="Lee H."/>
            <person name="Madan A."/>
            <person name="Yoon J.-G."/>
            <person name="Ryu G.-Y."/>
            <person name="Dasch G."/>
            <person name="Ereemeva M."/>
        </authorList>
    </citation>
    <scope>NUCLEOTIDE SEQUENCE [LARGE SCALE GENOMIC DNA]</scope>
    <source>
        <strain>OSU 85-389</strain>
    </source>
</reference>
<name>RL16_RICB8</name>